<evidence type="ECO:0000250" key="1"/>
<evidence type="ECO:0000250" key="2">
    <source>
        <dbReference type="UniProtKB" id="O46606"/>
    </source>
</evidence>
<evidence type="ECO:0000250" key="3">
    <source>
        <dbReference type="UniProtKB" id="Q80YA3"/>
    </source>
</evidence>
<evidence type="ECO:0000255" key="4">
    <source>
        <dbReference type="PROSITE-ProRule" id="PRU00378"/>
    </source>
</evidence>
<evidence type="ECO:0000256" key="5">
    <source>
        <dbReference type="SAM" id="MobiDB-lite"/>
    </source>
</evidence>
<evidence type="ECO:0000269" key="6">
    <source>
    </source>
</evidence>
<evidence type="ECO:0000269" key="7">
    <source>
    </source>
</evidence>
<evidence type="ECO:0000269" key="8">
    <source>
    </source>
</evidence>
<evidence type="ECO:0000269" key="9">
    <source>
    </source>
</evidence>
<evidence type="ECO:0000269" key="10">
    <source>
    </source>
</evidence>
<evidence type="ECO:0000269" key="11">
    <source>
    </source>
</evidence>
<evidence type="ECO:0000303" key="12">
    <source>
    </source>
</evidence>
<evidence type="ECO:0000303" key="13">
    <source>
    </source>
</evidence>
<evidence type="ECO:0000303" key="14">
    <source>
    </source>
</evidence>
<evidence type="ECO:0000303" key="15">
    <source>
    </source>
</evidence>
<evidence type="ECO:0000305" key="16"/>
<evidence type="ECO:0000305" key="17">
    <source>
    </source>
</evidence>
<evidence type="ECO:0000305" key="18">
    <source>
    </source>
</evidence>
<evidence type="ECO:0000305" key="19">
    <source>
    </source>
</evidence>
<evidence type="ECO:0000312" key="20">
    <source>
        <dbReference type="HGNC" id="HGNC:19714"/>
    </source>
</evidence>
<evidence type="ECO:0007744" key="21">
    <source>
    </source>
</evidence>
<sequence length="900" mass="100435">MNYPGRGSPRSPEHNGRGGGGGAWELGSDARPAFGGGVCCFEHLPGGDPDDGDVPLALLRGEPGLHLAPGTDDHNHHLALDPCLSDENYDFSSAESGSSLRYYSEGESGGGGSSLSLHPPQQPPLVPTNSGGGGATGGSPGERKRTRLGGPAARHRYEVVTELGPEEVRWFYKEDKKTWKPFIGYDSLRIELAFRTLLQTTGARPQGGDRDGDHVCSPTGPASSSGEDDDEDRACGFCQSTTGHEPEMVELVNIEPVCVRGGLYEVDVTQGECYPVYWNQADKIPVMRGQWFIDGTWQPLEEEESNLIEQEHLNCFRGQQMQENFDIEVSKSIDGKDAVHSFKLSRNHVDWHSVDEVYLYSDATTSKIARTVTQKLGFSKASSSGTRLHRGYVEEATLEDKPSQTTHIVFVVHGIGQKMDQGRIIKNTAMMREAARKIEERHFSNHATHVEFLPVEWRSKLTLDGDTVDSITPDKVRGLRDMLNSSAMDIMYYTSPLYRDELVKGLQQELNRLYSLFCSRNPDFEEKGGKVSIVSHSLGCVITYDIMTGWNPVRLYEQLLQKEEELPDERWMSYEERHLLDELYITKRRLKEIEERLHGLKASSMTQTPALKFKVENFFCMGSPLAVFLALRGIRPGNTGSQDHILPREICNRLLNIFHPTDPVAYRLEPLILKHYSNISPVQIHWYNTSNPLPYEHMKPSFLNPAKEPTSVSENEGISTIPSPVTSPVLSRRHYGESITNIGKASILGAASIGKGLGGMLFSRFGRSSTTQSSETSKDSMEDEKKPVASPSATTVGTQTLPHSSSGFLDSAYFRLQESFFNLPQLLFPENVMQNKDNALVELDHRIDFELREGLVESRYWSAVTSHTAYWSSLDVALFLLTFMYKHEHDDDAKPNLDPI</sequence>
<accession>Q8NEL9</accession>
<accession>G5E9D1</accession>
<accession>Q8WVH3</accession>
<accession>Q96LL2</accession>
<accession>Q9C0F8</accession>
<comment type="function">
    <text evidence="3 7 8 10 15 19">Phospholipase A1 (PLA1) that hydrolyzes ester bonds at the sn-1 position of glycerophospholipids producing a free fatty acid and a lysophospholipid (Probable) (PubMed:20359546, PubMed:22922100). Prefers phosphatidate (1,2-diacyl-sn-glycero-3-phosphate, PA) as substrate in vitro, but can efficiently hydrolyze phosphatidylinositol (1,2-diacyl-sn-glycero-3-phospho-(1D-myo-inositol), PI), as well as a range of other glycerophospholipid substrates such as phosphatidylcholine (1,2-diacyl-sn-glycero-3-phosphocholine, PC), phosphatidylethanolamine (1,2-diacyl-sn-glycero-3-phosphoethanolamine, PE), phosphatidylserine (1,2-diacyl-sn-glycero-3-phospho-L-serine, PS) and phosphatidylglycerol (1,2-diacyl-sn-glycero-3-phospho-(1'-sn-glycerol), PG) (Probable) (PubMed:20359546). Involved in the regulation of the endogenous content of polyunsaturated PI and PS lipids in the nervous system. Changes in these lipids extend to downstream metabolic products like PI phosphates PIP and PIP2, which play fundamental roles in cell biology (By similarity). Regulates mitochondrial morphology (PubMed:24599962). These dynamic changes may be due to PA hydrolysis at the mitochondrial surface (PubMed:24599962). May play a regulatory role in spermatogenesis or sperm function (PubMed:24599962).</text>
</comment>
<comment type="catalytic activity">
    <reaction evidence="7 18">
        <text>a 1,2-diacyl-sn-glycero-3-phosphate + H2O = a 2-acyl-sn-glycerol 3-phosphate + a fatty acid + H(+)</text>
        <dbReference type="Rhea" id="RHEA:44648"/>
        <dbReference type="ChEBI" id="CHEBI:15377"/>
        <dbReference type="ChEBI" id="CHEBI:15378"/>
        <dbReference type="ChEBI" id="CHEBI:28868"/>
        <dbReference type="ChEBI" id="CHEBI:58608"/>
        <dbReference type="ChEBI" id="CHEBI:64982"/>
        <dbReference type="EC" id="3.1.1.118"/>
    </reaction>
    <physiologicalReaction direction="left-to-right" evidence="7 18">
        <dbReference type="Rhea" id="RHEA:44649"/>
    </physiologicalReaction>
</comment>
<comment type="catalytic activity">
    <reaction evidence="7 19">
        <text>a 1,2-diacyl-sn-glycero-3-phospho-(1D-myo-inositol) + H2O = a 2-acyl-sn-glycero-3-phospho-D-myo-inositol + a fatty acid + H(+)</text>
        <dbReference type="Rhea" id="RHEA:35263"/>
        <dbReference type="ChEBI" id="CHEBI:15377"/>
        <dbReference type="ChEBI" id="CHEBI:15378"/>
        <dbReference type="ChEBI" id="CHEBI:28868"/>
        <dbReference type="ChEBI" id="CHEBI:57880"/>
        <dbReference type="ChEBI" id="CHEBI:64872"/>
        <dbReference type="EC" id="3.1.1.118"/>
    </reaction>
    <physiologicalReaction direction="left-to-right" evidence="7 19">
        <dbReference type="Rhea" id="RHEA:35264"/>
    </physiologicalReaction>
</comment>
<comment type="catalytic activity">
    <reaction evidence="17">
        <text>1-octadecanoyl-2-(5Z,8Z,11Z,14Z-eicosatetraenoyl)-sn-glycero-3-phospho-(1D-myo-inositol) + H2O = 2-(5Z,8Z,11Z,14Z-eicosatetraenoyl)-sn-glycero-3-phospho-(1D-myo-inositol) + octadecanoate + H(+)</text>
        <dbReference type="Rhea" id="RHEA:73967"/>
        <dbReference type="ChEBI" id="CHEBI:15377"/>
        <dbReference type="ChEBI" id="CHEBI:15378"/>
        <dbReference type="ChEBI" id="CHEBI:25629"/>
        <dbReference type="ChEBI" id="CHEBI:133606"/>
        <dbReference type="ChEBI" id="CHEBI:193055"/>
    </reaction>
    <physiologicalReaction direction="left-to-right" evidence="17">
        <dbReference type="Rhea" id="RHEA:73968"/>
    </physiologicalReaction>
</comment>
<comment type="catalytic activity">
    <reaction evidence="7 19">
        <text>a 1-acyl-2-(5Z,8Z,11Z,14Z-eicosatetraenoyl)-sn-glycero-3-phospho-(1D-myo-inositol) + H2O = 2-(5Z,8Z,11Z,14Z-eicosatetraenoyl)-sn-glycero-3-phospho-(1D-myo-inositol) + a fatty acid + H(+)</text>
        <dbReference type="Rhea" id="RHEA:73971"/>
        <dbReference type="ChEBI" id="CHEBI:15377"/>
        <dbReference type="ChEBI" id="CHEBI:15378"/>
        <dbReference type="ChEBI" id="CHEBI:28868"/>
        <dbReference type="ChEBI" id="CHEBI:75243"/>
        <dbReference type="ChEBI" id="CHEBI:193055"/>
    </reaction>
    <physiologicalReaction direction="left-to-right" evidence="7 19">
        <dbReference type="Rhea" id="RHEA:73972"/>
    </physiologicalReaction>
</comment>
<comment type="catalytic activity">
    <reaction evidence="3">
        <text>1,2-dihexadecanoyl-sn-glycero-3-phospho-(1D-myo-inositol) + H2O = 2-hexadecanoyl-sn-glycero-3-phospho-(1D-myo-inositol) + hexadecanoate + H(+)</text>
        <dbReference type="Rhea" id="RHEA:66708"/>
        <dbReference type="ChEBI" id="CHEBI:7896"/>
        <dbReference type="ChEBI" id="CHEBI:15377"/>
        <dbReference type="ChEBI" id="CHEBI:15378"/>
        <dbReference type="ChEBI" id="CHEBI:72835"/>
        <dbReference type="ChEBI" id="CHEBI:167448"/>
    </reaction>
    <physiologicalReaction direction="left-to-right" evidence="3">
        <dbReference type="Rhea" id="RHEA:66709"/>
    </physiologicalReaction>
</comment>
<comment type="catalytic activity">
    <reaction evidence="7">
        <text>a 1-acyl-2-(5Z,8Z,11Z,14Z)-eicosatetraenoyl-sn-glycero-3-phosphate + H2O = 2-(5Z,8Z,11Z,14Z-eicosatetraenoyl)-sn-glycero-3-phosphate + a fatty acid + H(+)</text>
        <dbReference type="Rhea" id="RHEA:73975"/>
        <dbReference type="ChEBI" id="CHEBI:15377"/>
        <dbReference type="ChEBI" id="CHEBI:15378"/>
        <dbReference type="ChEBI" id="CHEBI:28868"/>
        <dbReference type="ChEBI" id="CHEBI:74922"/>
        <dbReference type="ChEBI" id="CHEBI:78209"/>
    </reaction>
    <physiologicalReaction direction="left-to-right" evidence="7">
        <dbReference type="Rhea" id="RHEA:73976"/>
    </physiologicalReaction>
</comment>
<comment type="catalytic activity">
    <reaction evidence="18">
        <text>1,2-di-(9Z-octadecenoyl)-sn-glycero-3-phosphate + H2O = 2-(9Z-octadecenoyl)-sn-glycero-3-phosphate + (9Z)-octadecenoate + H(+)</text>
        <dbReference type="Rhea" id="RHEA:45128"/>
        <dbReference type="ChEBI" id="CHEBI:15377"/>
        <dbReference type="ChEBI" id="CHEBI:15378"/>
        <dbReference type="ChEBI" id="CHEBI:30823"/>
        <dbReference type="ChEBI" id="CHEBI:74546"/>
        <dbReference type="ChEBI" id="CHEBI:77593"/>
    </reaction>
    <physiologicalReaction direction="left-to-right" evidence="18">
        <dbReference type="Rhea" id="RHEA:45129"/>
    </physiologicalReaction>
</comment>
<comment type="catalytic activity">
    <reaction evidence="3">
        <text>1-hexadecanoyl-2-(9Z-octadecenoyl)-sn-glycero-3-phosphate + H2O = 2-(9Z-octadecenoyl)-sn-glycero-3-phosphate + hexadecanoate + H(+)</text>
        <dbReference type="Rhea" id="RHEA:40943"/>
        <dbReference type="ChEBI" id="CHEBI:7896"/>
        <dbReference type="ChEBI" id="CHEBI:15377"/>
        <dbReference type="ChEBI" id="CHEBI:15378"/>
        <dbReference type="ChEBI" id="CHEBI:64839"/>
        <dbReference type="ChEBI" id="CHEBI:77593"/>
    </reaction>
    <physiologicalReaction direction="left-to-right" evidence="3">
        <dbReference type="Rhea" id="RHEA:40944"/>
    </physiologicalReaction>
</comment>
<comment type="catalytic activity">
    <reaction evidence="3">
        <text>1-hexadecanoyl-2-(9Z-octadecenoyl)-sn-glycero-3-phospho-L-serine + H2O = 2-(9Z-octadecenoyl)-sn-glycero-3-phospho-L-serine + hexadecanoate + H(+)</text>
        <dbReference type="Rhea" id="RHEA:43968"/>
        <dbReference type="ChEBI" id="CHEBI:7896"/>
        <dbReference type="ChEBI" id="CHEBI:15377"/>
        <dbReference type="ChEBI" id="CHEBI:15378"/>
        <dbReference type="ChEBI" id="CHEBI:75029"/>
        <dbReference type="ChEBI" id="CHEBI:77342"/>
    </reaction>
    <physiologicalReaction direction="left-to-right" evidence="3">
        <dbReference type="Rhea" id="RHEA:43969"/>
    </physiologicalReaction>
</comment>
<comment type="catalytic activity">
    <reaction evidence="2">
        <text>1,2-di-(5Z,8Z,11Z,14Z)-eicosatetraenoyl-sn-glycero-3-phosphate + H2O = 2-(5Z,8Z,11Z,14Z-eicosatetraenoyl)-sn-glycero-3-phosphate + (5Z,8Z,11Z,14Z)-eicosatetraenoate + H(+)</text>
        <dbReference type="Rhea" id="RHEA:74159"/>
        <dbReference type="ChEBI" id="CHEBI:15377"/>
        <dbReference type="ChEBI" id="CHEBI:15378"/>
        <dbReference type="ChEBI" id="CHEBI:32395"/>
        <dbReference type="ChEBI" id="CHEBI:77126"/>
        <dbReference type="ChEBI" id="CHEBI:78209"/>
    </reaction>
    <physiologicalReaction direction="left-to-right" evidence="2">
        <dbReference type="Rhea" id="RHEA:74160"/>
    </physiologicalReaction>
</comment>
<comment type="catalytic activity">
    <reaction evidence="2">
        <text>1-octadecanoyl-2-(5Z,8Z,11Z,14Z-eicosatetraenoyl)-sn-glycero-3-phosphate + H2O = 2-(5Z,8Z,11Z,14Z-eicosatetraenoyl)-sn-glycero-3-phosphate + octadecanoate + H(+)</text>
        <dbReference type="Rhea" id="RHEA:74163"/>
        <dbReference type="ChEBI" id="CHEBI:15377"/>
        <dbReference type="ChEBI" id="CHEBI:15378"/>
        <dbReference type="ChEBI" id="CHEBI:25629"/>
        <dbReference type="ChEBI" id="CHEBI:77091"/>
        <dbReference type="ChEBI" id="CHEBI:78209"/>
    </reaction>
    <physiologicalReaction direction="left-to-right" evidence="2">
        <dbReference type="Rhea" id="RHEA:74164"/>
    </physiologicalReaction>
</comment>
<comment type="catalytic activity">
    <reaction evidence="7">
        <text>a 1,2-diacyl-sn-glycero-3-phosphocholine + H2O = a 2-acyl-sn-glycero-3-phosphocholine + a fatty acid + H(+)</text>
        <dbReference type="Rhea" id="RHEA:18689"/>
        <dbReference type="ChEBI" id="CHEBI:15377"/>
        <dbReference type="ChEBI" id="CHEBI:15378"/>
        <dbReference type="ChEBI" id="CHEBI:28868"/>
        <dbReference type="ChEBI" id="CHEBI:57643"/>
        <dbReference type="ChEBI" id="CHEBI:57875"/>
        <dbReference type="EC" id="3.1.1.32"/>
    </reaction>
    <physiologicalReaction direction="left-to-right" evidence="7">
        <dbReference type="Rhea" id="RHEA:18690"/>
    </physiologicalReaction>
</comment>
<comment type="catalytic activity">
    <reaction evidence="7">
        <text>a 1,2-diacyl-sn-glycero-3-phosphoethanolamine + H2O = a 2-acyl-sn-glycero-3-phosphoethanolamine + a fatty acid + H(+)</text>
        <dbReference type="Rhea" id="RHEA:44408"/>
        <dbReference type="ChEBI" id="CHEBI:15377"/>
        <dbReference type="ChEBI" id="CHEBI:15378"/>
        <dbReference type="ChEBI" id="CHEBI:28868"/>
        <dbReference type="ChEBI" id="CHEBI:64612"/>
        <dbReference type="ChEBI" id="CHEBI:65213"/>
    </reaction>
    <physiologicalReaction direction="left-to-right" evidence="7">
        <dbReference type="Rhea" id="RHEA:44409"/>
    </physiologicalReaction>
</comment>
<comment type="catalytic activity">
    <reaction evidence="3">
        <text>a 1,2-diacyl-sn-glycero-3-phospho-L-serine + H2O = a 2-acyl-sn-glycero-3-phospho-L-serine + a fatty acid + H(+)</text>
        <dbReference type="Rhea" id="RHEA:42212"/>
        <dbReference type="ChEBI" id="CHEBI:15377"/>
        <dbReference type="ChEBI" id="CHEBI:15378"/>
        <dbReference type="ChEBI" id="CHEBI:28868"/>
        <dbReference type="ChEBI" id="CHEBI:57262"/>
        <dbReference type="ChEBI" id="CHEBI:65214"/>
        <dbReference type="EC" id="3.1.1.111"/>
    </reaction>
    <physiologicalReaction direction="left-to-right" evidence="3">
        <dbReference type="Rhea" id="RHEA:42213"/>
    </physiologicalReaction>
</comment>
<comment type="catalytic activity">
    <reaction evidence="3">
        <text>a 1,2-diacyl-sn-glycero-3-phospho-(1'-sn-glycerol) + H2O = 2-acyl-sn-glycero-3-phospho-(1'-sn-glycerol) + a fatty acid + H(+)</text>
        <dbReference type="Rhea" id="RHEA:67428"/>
        <dbReference type="ChEBI" id="CHEBI:15377"/>
        <dbReference type="ChEBI" id="CHEBI:15378"/>
        <dbReference type="ChEBI" id="CHEBI:28868"/>
        <dbReference type="ChEBI" id="CHEBI:64716"/>
        <dbReference type="ChEBI" id="CHEBI:76528"/>
    </reaction>
    <physiologicalReaction direction="left-to-right" evidence="3">
        <dbReference type="Rhea" id="RHEA:67429"/>
    </physiologicalReaction>
</comment>
<comment type="catalytic activity">
    <reaction evidence="3">
        <text>1-hexadecanoyl-2-(9Z-octadecenoyl)-sn-glycero-3-phospho-(1'-sn-glycerol) + H2O = 2-(9Z-octadecenoyl)-sn-glycero-3-phospho-(1'-sn-glycerol) + hexadecanoate + H(+)</text>
        <dbReference type="Rhea" id="RHEA:74103"/>
        <dbReference type="ChEBI" id="CHEBI:7896"/>
        <dbReference type="ChEBI" id="CHEBI:15377"/>
        <dbReference type="ChEBI" id="CHEBI:15378"/>
        <dbReference type="ChEBI" id="CHEBI:72841"/>
        <dbReference type="ChEBI" id="CHEBI:141490"/>
    </reaction>
    <physiologicalReaction direction="left-to-right" evidence="3">
        <dbReference type="Rhea" id="RHEA:74104"/>
    </physiologicalReaction>
</comment>
<comment type="catalytic activity">
    <reaction evidence="7">
        <text>1-acyl-2-(5Z,8Z,11Z,14Z-eicosatetraenoyl)-sn-glycero-3-phosphocholine + H2O = 2-(5Z,8Z,11Z,14Z)-eicosatetraenoyl-sn-glycero-3-phosphocholine + a fatty acid + H(+)</text>
        <dbReference type="Rhea" id="RHEA:74247"/>
        <dbReference type="ChEBI" id="CHEBI:15377"/>
        <dbReference type="ChEBI" id="CHEBI:15378"/>
        <dbReference type="ChEBI" id="CHEBI:28868"/>
        <dbReference type="ChEBI" id="CHEBI:75063"/>
        <dbReference type="ChEBI" id="CHEBI:76079"/>
    </reaction>
    <physiologicalReaction direction="left-to-right" evidence="7">
        <dbReference type="Rhea" id="RHEA:74248"/>
    </physiologicalReaction>
</comment>
<comment type="catalytic activity">
    <reaction evidence="7">
        <text>1-acyl-2-(5Z,8Z,11Z,14Z)-eicosatetraenoyl-sn-glycero-3-phosphoethanolamine + H2O = 2-(5Z,8Z,11Z,14Z)-eicosatetraenoyl-sn-glycero-3-phosphoethanolamine + a fatty acid + H(+)</text>
        <dbReference type="Rhea" id="RHEA:74251"/>
        <dbReference type="ChEBI" id="CHEBI:15377"/>
        <dbReference type="ChEBI" id="CHEBI:15378"/>
        <dbReference type="ChEBI" id="CHEBI:28868"/>
        <dbReference type="ChEBI" id="CHEBI:75067"/>
        <dbReference type="ChEBI" id="CHEBI:76091"/>
    </reaction>
    <physiologicalReaction direction="left-to-right" evidence="7">
        <dbReference type="Rhea" id="RHEA:74252"/>
    </physiologicalReaction>
</comment>
<comment type="catalytic activity">
    <reaction evidence="19">
        <text>1-(9Z-octadecenoyl)-2-(7Z,10Z,13Z,16Z,19Z-docosapentaenoyl)-sn-glycero-3-phospho-1D-myo-inositol + H2O = 2-(7Z,10Z,13Z,16Z,19Z-docosapentaenoyl)-sn-glycero-3-phospho-1D-myo-inositol + (9Z)-octadecenoate + H(+)</text>
        <dbReference type="Rhea" id="RHEA:76971"/>
        <dbReference type="ChEBI" id="CHEBI:15377"/>
        <dbReference type="ChEBI" id="CHEBI:15378"/>
        <dbReference type="ChEBI" id="CHEBI:30823"/>
        <dbReference type="ChEBI" id="CHEBI:195484"/>
        <dbReference type="ChEBI" id="CHEBI:195486"/>
    </reaction>
    <physiologicalReaction direction="left-to-right" evidence="19">
        <dbReference type="Rhea" id="RHEA:76972"/>
    </physiologicalReaction>
</comment>
<comment type="catalytic activity">
    <reaction evidence="19">
        <text>1-(9Z-octadecenoyl)-2-(5Z,8Z,11Z,14Z-eicosatetraenoyl)-sn-glycero-3-phospho-1D-myo-inositol + H2O = 2-(5Z,8Z,11Z,14Z-eicosatetraenoyl)-sn-glycero-3-phospho-(1D-myo-inositol) + (9Z)-octadecenoate + H(+)</text>
        <dbReference type="Rhea" id="RHEA:76975"/>
        <dbReference type="ChEBI" id="CHEBI:15377"/>
        <dbReference type="ChEBI" id="CHEBI:15378"/>
        <dbReference type="ChEBI" id="CHEBI:30823"/>
        <dbReference type="ChEBI" id="CHEBI:78765"/>
        <dbReference type="ChEBI" id="CHEBI:193055"/>
    </reaction>
    <physiologicalReaction direction="left-to-right" evidence="19">
        <dbReference type="Rhea" id="RHEA:76976"/>
    </physiologicalReaction>
</comment>
<comment type="catalytic activity">
    <reaction evidence="19">
        <text>1,2-di-(9Z-octadecenoyl)-sn-glycero-3-phospho-1D-myo-inositol + H2O = 2-(9Z-octadecenoyl)-sn-glycero-3-phospho-1D-myo-inositol + (9Z)-octadecenoate + H(+)</text>
        <dbReference type="Rhea" id="RHEA:76979"/>
        <dbReference type="ChEBI" id="CHEBI:15377"/>
        <dbReference type="ChEBI" id="CHEBI:15378"/>
        <dbReference type="ChEBI" id="CHEBI:30823"/>
        <dbReference type="ChEBI" id="CHEBI:195485"/>
        <dbReference type="ChEBI" id="CHEBI:195487"/>
    </reaction>
    <physiologicalReaction direction="left-to-right" evidence="19">
        <dbReference type="Rhea" id="RHEA:76980"/>
    </physiologicalReaction>
</comment>
<comment type="catalytic activity">
    <reaction evidence="19">
        <text>1-(9Z-octadecenoyl)-2-(8Z,11Z,14Z-eicosatrienoyl)-sn-glycero-3-phospho-1D-myo-inositol + H2O = 2-(8Z,11Z,14Z-eicosatrienoyl)-sn-glycero-3-phospho-1D-myo-inositol + (9Z)-octadecenoate + H(+)</text>
        <dbReference type="Rhea" id="RHEA:76983"/>
        <dbReference type="ChEBI" id="CHEBI:15377"/>
        <dbReference type="ChEBI" id="CHEBI:15378"/>
        <dbReference type="ChEBI" id="CHEBI:30823"/>
        <dbReference type="ChEBI" id="CHEBI:195488"/>
        <dbReference type="ChEBI" id="CHEBI:195489"/>
    </reaction>
    <physiologicalReaction direction="left-to-right" evidence="19">
        <dbReference type="Rhea" id="RHEA:76984"/>
    </physiologicalReaction>
</comment>
<comment type="catalytic activity">
    <reaction evidence="3">
        <text>1,2-di-(9Z-octadecenoyl)-sn-glycero-3-phosphocholine + H2O = (9Z-octadecenoyl)-sn-glycero-3-phosphocholine + (9Z)-octadecenoate + H(+)</text>
        <dbReference type="Rhea" id="RHEA:38699"/>
        <dbReference type="ChEBI" id="CHEBI:15377"/>
        <dbReference type="ChEBI" id="CHEBI:15378"/>
        <dbReference type="ChEBI" id="CHEBI:30823"/>
        <dbReference type="ChEBI" id="CHEBI:74669"/>
        <dbReference type="ChEBI" id="CHEBI:76083"/>
    </reaction>
    <physiologicalReaction direction="left-to-right" evidence="3">
        <dbReference type="Rhea" id="RHEA:38700"/>
    </physiologicalReaction>
</comment>
<comment type="activity regulation">
    <text evidence="7">Phosphatidate (1,2-diacyl-sn-glycero-3-phosphate, PA) can positively regulate phospholipase A1 activity.</text>
</comment>
<comment type="pathway">
    <text evidence="19">Phospholipid metabolism; phosphatidylinositol metabolism.</text>
</comment>
<comment type="subunit">
    <text evidence="8">Forms homooligomers and, to a much smaller extent, heterooligomers with DDHD2 (PubMed:22922100).</text>
</comment>
<comment type="interaction">
    <interactant intactId="EBI-11062258">
        <id>Q8NEL9-2</id>
    </interactant>
    <interactant intactId="EBI-12330477">
        <id>Q2VPA4</id>
        <label>CR1L</label>
    </interactant>
    <organismsDiffer>false</organismsDiffer>
    <experiments>3</experiments>
</comment>
<comment type="interaction">
    <interactant intactId="EBI-11062258">
        <id>Q8NEL9-2</id>
    </interactant>
    <interactant intactId="EBI-744471">
        <id>O43167</id>
        <label>ZBTB24</label>
    </interactant>
    <organismsDiffer>false</organismsDiffer>
    <experiments>3</experiments>
</comment>
<comment type="subcellular location">
    <subcellularLocation>
        <location evidence="6">Cytoplasm</location>
    </subcellularLocation>
</comment>
<comment type="alternative products">
    <event type="alternative splicing"/>
    <isoform>
        <id>Q8NEL9-1</id>
        <name>1</name>
        <sequence type="displayed"/>
    </isoform>
    <isoform>
        <id>Q8NEL9-2</id>
        <name>2</name>
        <sequence type="described" ref="VSP_008629"/>
    </isoform>
    <isoform>
        <id>Q8NEL9-3</id>
        <name>3</name>
        <sequence type="described" ref="VSP_008628 VSP_008629"/>
    </isoform>
    <isoform>
        <id>Q8NEL9-4</id>
        <name>4</name>
        <sequence type="described" ref="VSP_045340 VSP_008629"/>
    </isoform>
</comment>
<comment type="tissue specificity">
    <text evidence="11">Highly expressed in testis. Also expressed in brain, spleen and lung. Only expressed in cerebellum in fetal brain.</text>
</comment>
<comment type="disease" evidence="9">
    <disease id="DI-03678">
        <name>Spastic paraplegia 28, autosomal recessive</name>
        <acronym>SPG28</acronym>
        <description>A form of spastic paraplegia, a neurodegenerative disorder characterized by a slow, gradual, progressive weakness and spasticity of the lower limbs. Rate of progression and the severity of symptoms are quite variable. Initial symptoms may include difficulty with balance, weakness and stiffness in the legs, muscle spasms, and dragging the toes when walking. In some forms of the disorder, bladder symptoms (such as incontinence) may appear, or the weakness and stiffness may spread to other parts of the body. Some SPG28 patients also have distal sensory impairment.</description>
        <dbReference type="MIM" id="609340"/>
    </disease>
    <text>The disease is caused by variants affecting the gene represented in this entry.</text>
</comment>
<comment type="similarity">
    <text evidence="16">Belongs to the PA-PLA1 family.</text>
</comment>
<comment type="sequence caution" evidence="16">
    <conflict type="erroneous initiation">
        <sequence resource="EMBL-CDS" id="BAB21796"/>
    </conflict>
    <text>Extended N-terminus.</text>
</comment>
<comment type="sequence caution" evidence="16">
    <conflict type="erroneous initiation">
        <sequence resource="EMBL-CDS" id="BAB71679"/>
    </conflict>
    <text>Truncated N-terminus.</text>
</comment>
<protein>
    <recommendedName>
        <fullName evidence="15">Phospholipase DDHD1</fullName>
        <ecNumber evidence="3">3.1.1.111</ecNumber>
        <ecNumber evidence="7">3.1.1.32</ecNumber>
    </recommendedName>
    <alternativeName>
        <fullName>DDHD domain-containing protein 1</fullName>
    </alternativeName>
    <alternativeName>
        <fullName>Phosphatidic acid-preferring phospholipase A1 homolog</fullName>
        <shortName evidence="15">PA-PLA1</shortName>
        <ecNumber evidence="7 8 19">3.1.1.118</ecNumber>
    </alternativeName>
    <alternativeName>
        <fullName>Phospholipid sn-1 acylhydrolase</fullName>
    </alternativeName>
</protein>
<organism>
    <name type="scientific">Homo sapiens</name>
    <name type="common">Human</name>
    <dbReference type="NCBI Taxonomy" id="9606"/>
    <lineage>
        <taxon>Eukaryota</taxon>
        <taxon>Metazoa</taxon>
        <taxon>Chordata</taxon>
        <taxon>Craniata</taxon>
        <taxon>Vertebrata</taxon>
        <taxon>Euteleostomi</taxon>
        <taxon>Mammalia</taxon>
        <taxon>Eutheria</taxon>
        <taxon>Euarchontoglires</taxon>
        <taxon>Primates</taxon>
        <taxon>Haplorrhini</taxon>
        <taxon>Catarrhini</taxon>
        <taxon>Hominidae</taxon>
        <taxon>Homo</taxon>
    </lineage>
</organism>
<feature type="chain" id="PRO_0000079845" description="Phospholipase DDHD1">
    <location>
        <begin position="1"/>
        <end position="900"/>
    </location>
</feature>
<feature type="domain" description="DDHD" evidence="4">
    <location>
        <begin position="611"/>
        <end position="886"/>
    </location>
</feature>
<feature type="region of interest" description="Disordered" evidence="5">
    <location>
        <begin position="1"/>
        <end position="28"/>
    </location>
</feature>
<feature type="region of interest" description="Disordered" evidence="5">
    <location>
        <begin position="100"/>
        <end position="152"/>
    </location>
</feature>
<feature type="region of interest" description="Disordered" evidence="5">
    <location>
        <begin position="202"/>
        <end position="233"/>
    </location>
</feature>
<feature type="region of interest" description="Disordered" evidence="5">
    <location>
        <begin position="706"/>
        <end position="725"/>
    </location>
</feature>
<feature type="region of interest" description="Disordered" evidence="5">
    <location>
        <begin position="768"/>
        <end position="801"/>
    </location>
</feature>
<feature type="compositionally biased region" description="Gly residues" evidence="5">
    <location>
        <begin position="130"/>
        <end position="140"/>
    </location>
</feature>
<feature type="compositionally biased region" description="Polar residues" evidence="5">
    <location>
        <begin position="710"/>
        <end position="725"/>
    </location>
</feature>
<feature type="compositionally biased region" description="Basic and acidic residues" evidence="5">
    <location>
        <begin position="776"/>
        <end position="787"/>
    </location>
</feature>
<feature type="compositionally biased region" description="Polar residues" evidence="5">
    <location>
        <begin position="791"/>
        <end position="801"/>
    </location>
</feature>
<feature type="active site" evidence="1">
    <location>
        <position position="537"/>
    </location>
</feature>
<feature type="modified residue" description="Phosphoserine" evidence="21">
    <location>
        <position position="8"/>
    </location>
</feature>
<feature type="modified residue" description="Phosphoserine" evidence="21">
    <location>
        <position position="11"/>
    </location>
</feature>
<feature type="modified residue" description="Phosphoserine" evidence="3">
    <location>
        <position position="723"/>
    </location>
</feature>
<feature type="splice variant" id="VSP_008628" description="In isoform 3." evidence="12 13">
    <location>
        <begin position="1"/>
        <end position="418"/>
    </location>
</feature>
<feature type="splice variant" id="VSP_045340" description="In isoform 4." evidence="16">
    <original>D</original>
    <variation>DGSGINYS</variation>
    <location>
        <position position="337"/>
    </location>
</feature>
<feature type="splice variant" id="VSP_008629" description="In isoform 2, isoform 3 and isoform 4." evidence="12 13 14">
    <original>YFRLQESFFNLPQLLFPENVMQNKDNALV</original>
    <variation>L</variation>
    <location>
        <begin position="813"/>
        <end position="841"/>
    </location>
</feature>
<feature type="mutagenesis site" description="No effect on homooligomer formation; when associated with S-593." evidence="8">
    <original>L</original>
    <variation>S</variation>
    <location>
        <position position="590"/>
    </location>
</feature>
<feature type="mutagenesis site" description="No effect on homooligomer formation; when associated with S-590." evidence="8">
    <original>I</original>
    <variation>S</variation>
    <location>
        <position position="593"/>
    </location>
</feature>
<feature type="mutagenesis site" description="Markedly decreased enzymatic activity." evidence="8">
    <original>D</original>
    <variation>A</variation>
    <location>
        <position position="662"/>
    </location>
</feature>
<feature type="mutagenesis site" description="Markedly decreased enzymatic activity." evidence="8">
    <original>D</original>
    <variation>A</variation>
    <location>
        <position position="848"/>
    </location>
</feature>
<feature type="mutagenesis site" description="Markedly decreased enzymatic activity." evidence="8">
    <original>H</original>
    <variation>A</variation>
    <location>
        <position position="867"/>
    </location>
</feature>
<feature type="mutagenesis site" description="No effect on enzymatic activity." evidence="8">
    <original>D</original>
    <variation>A</variation>
    <location>
        <position position="875"/>
    </location>
</feature>
<feature type="sequence conflict" description="In Ref. 2; AK125372." evidence="16" ref="2">
    <original>G</original>
    <variation>GGG</variation>
    <location>
        <position position="109"/>
    </location>
</feature>
<feature type="sequence conflict" description="In Ref. 5; AAH30703." evidence="16" ref="5">
    <original>H</original>
    <variation>R</variation>
    <location>
        <position position="675"/>
    </location>
</feature>
<name>DDHD1_HUMAN</name>
<gene>
    <name evidence="20" type="primary">DDHD1</name>
    <name type="synonym">KIAA1705</name>
</gene>
<proteinExistence type="evidence at protein level"/>
<dbReference type="EC" id="3.1.1.111" evidence="3"/>
<dbReference type="EC" id="3.1.1.32" evidence="7"/>
<dbReference type="EC" id="3.1.1.118" evidence="7 8 19"/>
<dbReference type="EMBL" id="AB051492">
    <property type="protein sequence ID" value="BAB21796.1"/>
    <property type="status" value="ALT_INIT"/>
    <property type="molecule type" value="mRNA"/>
</dbReference>
<dbReference type="EMBL" id="AK058137">
    <property type="protein sequence ID" value="BAB71679.1"/>
    <property type="status" value="ALT_INIT"/>
    <property type="molecule type" value="mRNA"/>
</dbReference>
<dbReference type="EMBL" id="AK125372">
    <property type="status" value="NOT_ANNOTATED_CDS"/>
    <property type="molecule type" value="mRNA"/>
</dbReference>
<dbReference type="EMBL" id="AL352979">
    <property type="status" value="NOT_ANNOTATED_CDS"/>
    <property type="molecule type" value="Genomic_DNA"/>
</dbReference>
<dbReference type="EMBL" id="AL356020">
    <property type="status" value="NOT_ANNOTATED_CDS"/>
    <property type="molecule type" value="Genomic_DNA"/>
</dbReference>
<dbReference type="EMBL" id="CH471061">
    <property type="protein sequence ID" value="EAW80623.1"/>
    <property type="molecule type" value="Genomic_DNA"/>
</dbReference>
<dbReference type="EMBL" id="BC018014">
    <property type="protein sequence ID" value="AAH18014.1"/>
    <property type="molecule type" value="mRNA"/>
</dbReference>
<dbReference type="EMBL" id="BC030703">
    <property type="protein sequence ID" value="AAH30703.1"/>
    <property type="molecule type" value="mRNA"/>
</dbReference>
<dbReference type="CCDS" id="CCDS53895.1">
    <molecule id="Q8NEL9-1"/>
</dbReference>
<dbReference type="CCDS" id="CCDS53896.1">
    <molecule id="Q8NEL9-4"/>
</dbReference>
<dbReference type="CCDS" id="CCDS9714.1">
    <molecule id="Q8NEL9-2"/>
</dbReference>
<dbReference type="RefSeq" id="NP_001153619.1">
    <molecule id="Q8NEL9-4"/>
    <property type="nucleotide sequence ID" value="NM_001160147.2"/>
</dbReference>
<dbReference type="RefSeq" id="NP_001153620.1">
    <molecule id="Q8NEL9-1"/>
    <property type="nucleotide sequence ID" value="NM_001160148.2"/>
</dbReference>
<dbReference type="RefSeq" id="NP_085140.2">
    <molecule id="Q8NEL9-2"/>
    <property type="nucleotide sequence ID" value="NM_030637.3"/>
</dbReference>
<dbReference type="BioGRID" id="123318">
    <property type="interactions" value="41"/>
</dbReference>
<dbReference type="FunCoup" id="Q8NEL9">
    <property type="interactions" value="1658"/>
</dbReference>
<dbReference type="IntAct" id="Q8NEL9">
    <property type="interactions" value="26"/>
</dbReference>
<dbReference type="STRING" id="9606.ENSP00000500986"/>
<dbReference type="SwissLipids" id="SLP:000001079">
    <molecule id="Q8NEL9-2"/>
</dbReference>
<dbReference type="GlyGen" id="Q8NEL9">
    <property type="glycosylation" value="1 site, 1 O-linked glycan (1 site)"/>
</dbReference>
<dbReference type="iPTMnet" id="Q8NEL9"/>
<dbReference type="PhosphoSitePlus" id="Q8NEL9"/>
<dbReference type="BioMuta" id="DDHD1"/>
<dbReference type="DMDM" id="37999716"/>
<dbReference type="jPOST" id="Q8NEL9"/>
<dbReference type="MassIVE" id="Q8NEL9"/>
<dbReference type="PaxDb" id="9606-ENSP00000327104"/>
<dbReference type="PeptideAtlas" id="Q8NEL9"/>
<dbReference type="ProteomicsDB" id="33905"/>
<dbReference type="ProteomicsDB" id="73175">
    <molecule id="Q8NEL9-1"/>
</dbReference>
<dbReference type="ProteomicsDB" id="73176">
    <molecule id="Q8NEL9-2"/>
</dbReference>
<dbReference type="ProteomicsDB" id="73177">
    <molecule id="Q8NEL9-3"/>
</dbReference>
<dbReference type="Pumba" id="Q8NEL9"/>
<dbReference type="Antibodypedia" id="23915">
    <property type="antibodies" value="40 antibodies from 8 providers"/>
</dbReference>
<dbReference type="DNASU" id="80821"/>
<dbReference type="Ensembl" id="ENST00000357758.3">
    <molecule id="Q8NEL9-2"/>
    <property type="protein sequence ID" value="ENSP00000350401.3"/>
    <property type="gene ID" value="ENSG00000100523.17"/>
</dbReference>
<dbReference type="Ensembl" id="ENST00000395606.5">
    <molecule id="Q8NEL9-4"/>
    <property type="protein sequence ID" value="ENSP00000378970.1"/>
    <property type="gene ID" value="ENSG00000100523.17"/>
</dbReference>
<dbReference type="Ensembl" id="ENST00000673822.2">
    <molecule id="Q8NEL9-1"/>
    <property type="protein sequence ID" value="ENSP00000500986.2"/>
    <property type="gene ID" value="ENSG00000100523.17"/>
</dbReference>
<dbReference type="GeneID" id="80821"/>
<dbReference type="KEGG" id="hsa:80821"/>
<dbReference type="MANE-Select" id="ENST00000673822.2">
    <property type="protein sequence ID" value="ENSP00000500986.2"/>
    <property type="RefSeq nucleotide sequence ID" value="NM_001160148.2"/>
    <property type="RefSeq protein sequence ID" value="NP_001153620.1"/>
</dbReference>
<dbReference type="UCSC" id="uc001xah.4">
    <molecule id="Q8NEL9-1"/>
    <property type="organism name" value="human"/>
</dbReference>
<dbReference type="AGR" id="HGNC:19714"/>
<dbReference type="CTD" id="80821"/>
<dbReference type="DisGeNET" id="80821"/>
<dbReference type="GeneCards" id="DDHD1"/>
<dbReference type="HGNC" id="HGNC:19714">
    <property type="gene designation" value="DDHD1"/>
</dbReference>
<dbReference type="HPA" id="ENSG00000100523">
    <property type="expression patterns" value="Tissue enhanced (testis)"/>
</dbReference>
<dbReference type="MalaCards" id="DDHD1"/>
<dbReference type="MIM" id="609340">
    <property type="type" value="phenotype"/>
</dbReference>
<dbReference type="MIM" id="614603">
    <property type="type" value="gene"/>
</dbReference>
<dbReference type="neXtProt" id="NX_Q8NEL9"/>
<dbReference type="OpenTargets" id="ENSG00000100523"/>
<dbReference type="Orphanet" id="101008">
    <property type="disease" value="Autosomal recessive spastic paraplegia type 28"/>
</dbReference>
<dbReference type="PharmGKB" id="PA134861440"/>
<dbReference type="VEuPathDB" id="HostDB:ENSG00000100523"/>
<dbReference type="eggNOG" id="KOG2308">
    <property type="taxonomic scope" value="Eukaryota"/>
</dbReference>
<dbReference type="GeneTree" id="ENSGT00940000156065"/>
<dbReference type="InParanoid" id="Q8NEL9"/>
<dbReference type="OMA" id="DNKKSWW"/>
<dbReference type="OrthoDB" id="431378at2759"/>
<dbReference type="PAN-GO" id="Q8NEL9">
    <property type="GO annotations" value="2 GO annotations based on evolutionary models"/>
</dbReference>
<dbReference type="PhylomeDB" id="Q8NEL9"/>
<dbReference type="TreeFam" id="TF314133"/>
<dbReference type="BioCyc" id="MetaCyc:ENSG00000100523-MONOMER"/>
<dbReference type="BRENDA" id="3.1.1.118">
    <property type="organism ID" value="2681"/>
</dbReference>
<dbReference type="BRENDA" id="3.1.1.32">
    <property type="organism ID" value="2681"/>
</dbReference>
<dbReference type="PathwayCommons" id="Q8NEL9"/>
<dbReference type="Reactome" id="R-HSA-1483166">
    <property type="pathway name" value="Synthesis of PA"/>
</dbReference>
<dbReference type="SignaLink" id="Q8NEL9"/>
<dbReference type="SIGNOR" id="Q8NEL9"/>
<dbReference type="UniPathway" id="UPA00949"/>
<dbReference type="BioGRID-ORCS" id="80821">
    <property type="hits" value="23 hits in 1155 CRISPR screens"/>
</dbReference>
<dbReference type="ChiTaRS" id="DDHD1">
    <property type="organism name" value="human"/>
</dbReference>
<dbReference type="GenomeRNAi" id="80821"/>
<dbReference type="Pharos" id="Q8NEL9">
    <property type="development level" value="Tbio"/>
</dbReference>
<dbReference type="PRO" id="PR:Q8NEL9"/>
<dbReference type="Proteomes" id="UP000005640">
    <property type="component" value="Chromosome 14"/>
</dbReference>
<dbReference type="RNAct" id="Q8NEL9">
    <property type="molecule type" value="protein"/>
</dbReference>
<dbReference type="Bgee" id="ENSG00000100523">
    <property type="expression patterns" value="Expressed in sperm and 188 other cell types or tissues"/>
</dbReference>
<dbReference type="ExpressionAtlas" id="Q8NEL9">
    <property type="expression patterns" value="baseline and differential"/>
</dbReference>
<dbReference type="GO" id="GO:0005737">
    <property type="term" value="C:cytoplasm"/>
    <property type="evidence" value="ECO:0000318"/>
    <property type="project" value="GO_Central"/>
</dbReference>
<dbReference type="GO" id="GO:0005829">
    <property type="term" value="C:cytosol"/>
    <property type="evidence" value="ECO:0000304"/>
    <property type="project" value="Reactome"/>
</dbReference>
<dbReference type="GO" id="GO:0046872">
    <property type="term" value="F:metal ion binding"/>
    <property type="evidence" value="ECO:0007669"/>
    <property type="project" value="InterPro"/>
</dbReference>
<dbReference type="GO" id="GO:0008970">
    <property type="term" value="F:phospholipase A1 activity"/>
    <property type="evidence" value="ECO:0007669"/>
    <property type="project" value="RHEA"/>
</dbReference>
<dbReference type="GO" id="GO:0004620">
    <property type="term" value="F:phospholipase activity"/>
    <property type="evidence" value="ECO:0000318"/>
    <property type="project" value="GO_Central"/>
</dbReference>
<dbReference type="GO" id="GO:0046488">
    <property type="term" value="P:phosphatidylinositol metabolic process"/>
    <property type="evidence" value="ECO:0007669"/>
    <property type="project" value="UniProtKB-UniPathway"/>
</dbReference>
<dbReference type="GO" id="GO:0090141">
    <property type="term" value="P:positive regulation of mitochondrial fission"/>
    <property type="evidence" value="ECO:0000314"/>
    <property type="project" value="MGI"/>
</dbReference>
<dbReference type="InterPro" id="IPR004177">
    <property type="entry name" value="DDHD_dom"/>
</dbReference>
<dbReference type="PANTHER" id="PTHR23509">
    <property type="entry name" value="PA-PL1 PHOSPHOLIPASE FAMILY"/>
    <property type="match status" value="1"/>
</dbReference>
<dbReference type="PANTHER" id="PTHR23509:SF32">
    <property type="entry name" value="PHOSPHOLIPASE DDHD1"/>
    <property type="match status" value="1"/>
</dbReference>
<dbReference type="Pfam" id="PF02862">
    <property type="entry name" value="DDHD"/>
    <property type="match status" value="1"/>
</dbReference>
<dbReference type="SMART" id="SM01127">
    <property type="entry name" value="DDHD"/>
    <property type="match status" value="1"/>
</dbReference>
<dbReference type="PROSITE" id="PS51043">
    <property type="entry name" value="DDHD"/>
    <property type="match status" value="1"/>
</dbReference>
<keyword id="KW-0025">Alternative splicing</keyword>
<keyword id="KW-0963">Cytoplasm</keyword>
<keyword id="KW-0890">Hereditary spastic paraplegia</keyword>
<keyword id="KW-0378">Hydrolase</keyword>
<keyword id="KW-0443">Lipid metabolism</keyword>
<keyword id="KW-0523">Neurodegeneration</keyword>
<keyword id="KW-1208">Phospholipid metabolism</keyword>
<keyword id="KW-0597">Phosphoprotein</keyword>
<keyword id="KW-1267">Proteomics identification</keyword>
<keyword id="KW-1185">Reference proteome</keyword>
<reference key="1">
    <citation type="journal article" date="2000" name="DNA Res.">
        <title>Prediction of the coding sequences of unidentified human genes. XIX. The complete sequences of 100 new cDNA clones from brain which code for large proteins in vitro.</title>
        <authorList>
            <person name="Nagase T."/>
            <person name="Kikuno R."/>
            <person name="Hattori A."/>
            <person name="Kondo Y."/>
            <person name="Okumura K."/>
            <person name="Ohara O."/>
        </authorList>
    </citation>
    <scope>NUCLEOTIDE SEQUENCE [LARGE SCALE MRNA] (ISOFORM 3)</scope>
    <source>
        <tissue>Brain</tissue>
    </source>
</reference>
<reference key="2">
    <citation type="journal article" date="2004" name="Nat. Genet.">
        <title>Complete sequencing and characterization of 21,243 full-length human cDNAs.</title>
        <authorList>
            <person name="Ota T."/>
            <person name="Suzuki Y."/>
            <person name="Nishikawa T."/>
            <person name="Otsuki T."/>
            <person name="Sugiyama T."/>
            <person name="Irie R."/>
            <person name="Wakamatsu A."/>
            <person name="Hayashi K."/>
            <person name="Sato H."/>
            <person name="Nagai K."/>
            <person name="Kimura K."/>
            <person name="Makita H."/>
            <person name="Sekine M."/>
            <person name="Obayashi M."/>
            <person name="Nishi T."/>
            <person name="Shibahara T."/>
            <person name="Tanaka T."/>
            <person name="Ishii S."/>
            <person name="Yamamoto J."/>
            <person name="Saito K."/>
            <person name="Kawai Y."/>
            <person name="Isono Y."/>
            <person name="Nakamura Y."/>
            <person name="Nagahari K."/>
            <person name="Murakami K."/>
            <person name="Yasuda T."/>
            <person name="Iwayanagi T."/>
            <person name="Wagatsuma M."/>
            <person name="Shiratori A."/>
            <person name="Sudo H."/>
            <person name="Hosoiri T."/>
            <person name="Kaku Y."/>
            <person name="Kodaira H."/>
            <person name="Kondo H."/>
            <person name="Sugawara M."/>
            <person name="Takahashi M."/>
            <person name="Kanda K."/>
            <person name="Yokoi T."/>
            <person name="Furuya T."/>
            <person name="Kikkawa E."/>
            <person name="Omura Y."/>
            <person name="Abe K."/>
            <person name="Kamihara K."/>
            <person name="Katsuta N."/>
            <person name="Sato K."/>
            <person name="Tanikawa M."/>
            <person name="Yamazaki M."/>
            <person name="Ninomiya K."/>
            <person name="Ishibashi T."/>
            <person name="Yamashita H."/>
            <person name="Murakawa K."/>
            <person name="Fujimori K."/>
            <person name="Tanai H."/>
            <person name="Kimata M."/>
            <person name="Watanabe M."/>
            <person name="Hiraoka S."/>
            <person name="Chiba Y."/>
            <person name="Ishida S."/>
            <person name="Ono Y."/>
            <person name="Takiguchi S."/>
            <person name="Watanabe S."/>
            <person name="Yosida M."/>
            <person name="Hotuta T."/>
            <person name="Kusano J."/>
            <person name="Kanehori K."/>
            <person name="Takahashi-Fujii A."/>
            <person name="Hara H."/>
            <person name="Tanase T.-O."/>
            <person name="Nomura Y."/>
            <person name="Togiya S."/>
            <person name="Komai F."/>
            <person name="Hara R."/>
            <person name="Takeuchi K."/>
            <person name="Arita M."/>
            <person name="Imose N."/>
            <person name="Musashino K."/>
            <person name="Yuuki H."/>
            <person name="Oshima A."/>
            <person name="Sasaki N."/>
            <person name="Aotsuka S."/>
            <person name="Yoshikawa Y."/>
            <person name="Matsunawa H."/>
            <person name="Ichihara T."/>
            <person name="Shiohata N."/>
            <person name="Sano S."/>
            <person name="Moriya S."/>
            <person name="Momiyama H."/>
            <person name="Satoh N."/>
            <person name="Takami S."/>
            <person name="Terashima Y."/>
            <person name="Suzuki O."/>
            <person name="Nakagawa S."/>
            <person name="Senoh A."/>
            <person name="Mizoguchi H."/>
            <person name="Goto Y."/>
            <person name="Shimizu F."/>
            <person name="Wakebe H."/>
            <person name="Hishigaki H."/>
            <person name="Watanabe T."/>
            <person name="Sugiyama A."/>
            <person name="Takemoto M."/>
            <person name="Kawakami B."/>
            <person name="Yamazaki M."/>
            <person name="Watanabe K."/>
            <person name="Kumagai A."/>
            <person name="Itakura S."/>
            <person name="Fukuzumi Y."/>
            <person name="Fujimori Y."/>
            <person name="Komiyama M."/>
            <person name="Tashiro H."/>
            <person name="Tanigami A."/>
            <person name="Fujiwara T."/>
            <person name="Ono T."/>
            <person name="Yamada K."/>
            <person name="Fujii Y."/>
            <person name="Ozaki K."/>
            <person name="Hirao M."/>
            <person name="Ohmori Y."/>
            <person name="Kawabata A."/>
            <person name="Hikiji T."/>
            <person name="Kobatake N."/>
            <person name="Inagaki H."/>
            <person name="Ikema Y."/>
            <person name="Okamoto S."/>
            <person name="Okitani R."/>
            <person name="Kawakami T."/>
            <person name="Noguchi S."/>
            <person name="Itoh T."/>
            <person name="Shigeta K."/>
            <person name="Senba T."/>
            <person name="Matsumura K."/>
            <person name="Nakajima Y."/>
            <person name="Mizuno T."/>
            <person name="Morinaga M."/>
            <person name="Sasaki M."/>
            <person name="Togashi T."/>
            <person name="Oyama M."/>
            <person name="Hata H."/>
            <person name="Watanabe M."/>
            <person name="Komatsu T."/>
            <person name="Mizushima-Sugano J."/>
            <person name="Satoh T."/>
            <person name="Shirai Y."/>
            <person name="Takahashi Y."/>
            <person name="Nakagawa K."/>
            <person name="Okumura K."/>
            <person name="Nagase T."/>
            <person name="Nomura N."/>
            <person name="Kikuchi H."/>
            <person name="Masuho Y."/>
            <person name="Yamashita R."/>
            <person name="Nakai K."/>
            <person name="Yada T."/>
            <person name="Nakamura Y."/>
            <person name="Ohara O."/>
            <person name="Isogai T."/>
            <person name="Sugano S."/>
        </authorList>
    </citation>
    <scope>NUCLEOTIDE SEQUENCE [LARGE SCALE MRNA] (ISOFORM 3)</scope>
    <scope>NUCLEOTIDE SEQUENCE [LARGE SCALE MRNA] OF 357-900 (ISOFORMS 2/4)</scope>
    <source>
        <tissue>Fetal brain</tissue>
        <tissue>Testis</tissue>
    </source>
</reference>
<reference key="3">
    <citation type="journal article" date="2003" name="Nature">
        <title>The DNA sequence and analysis of human chromosome 14.</title>
        <authorList>
            <person name="Heilig R."/>
            <person name="Eckenberg R."/>
            <person name="Petit J.-L."/>
            <person name="Fonknechten N."/>
            <person name="Da Silva C."/>
            <person name="Cattolico L."/>
            <person name="Levy M."/>
            <person name="Barbe V."/>
            <person name="De Berardinis V."/>
            <person name="Ureta-Vidal A."/>
            <person name="Pelletier E."/>
            <person name="Vico V."/>
            <person name="Anthouard V."/>
            <person name="Rowen L."/>
            <person name="Madan A."/>
            <person name="Qin S."/>
            <person name="Sun H."/>
            <person name="Du H."/>
            <person name="Pepin K."/>
            <person name="Artiguenave F."/>
            <person name="Robert C."/>
            <person name="Cruaud C."/>
            <person name="Bruels T."/>
            <person name="Jaillon O."/>
            <person name="Friedlander L."/>
            <person name="Samson G."/>
            <person name="Brottier P."/>
            <person name="Cure S."/>
            <person name="Segurens B."/>
            <person name="Aniere F."/>
            <person name="Samain S."/>
            <person name="Crespeau H."/>
            <person name="Abbasi N."/>
            <person name="Aiach N."/>
            <person name="Boscus D."/>
            <person name="Dickhoff R."/>
            <person name="Dors M."/>
            <person name="Dubois I."/>
            <person name="Friedman C."/>
            <person name="Gouyvenoux M."/>
            <person name="James R."/>
            <person name="Madan A."/>
            <person name="Mairey-Estrada B."/>
            <person name="Mangenot S."/>
            <person name="Martins N."/>
            <person name="Menard M."/>
            <person name="Oztas S."/>
            <person name="Ratcliffe A."/>
            <person name="Shaffer T."/>
            <person name="Trask B."/>
            <person name="Vacherie B."/>
            <person name="Bellemere C."/>
            <person name="Belser C."/>
            <person name="Besnard-Gonnet M."/>
            <person name="Bartol-Mavel D."/>
            <person name="Boutard M."/>
            <person name="Briez-Silla S."/>
            <person name="Combette S."/>
            <person name="Dufosse-Laurent V."/>
            <person name="Ferron C."/>
            <person name="Lechaplais C."/>
            <person name="Louesse C."/>
            <person name="Muselet D."/>
            <person name="Magdelenat G."/>
            <person name="Pateau E."/>
            <person name="Petit E."/>
            <person name="Sirvain-Trukniewicz P."/>
            <person name="Trybou A."/>
            <person name="Vega-Czarny N."/>
            <person name="Bataille E."/>
            <person name="Bluet E."/>
            <person name="Bordelais I."/>
            <person name="Dubois M."/>
            <person name="Dumont C."/>
            <person name="Guerin T."/>
            <person name="Haffray S."/>
            <person name="Hammadi R."/>
            <person name="Muanga J."/>
            <person name="Pellouin V."/>
            <person name="Robert D."/>
            <person name="Wunderle E."/>
            <person name="Gauguet G."/>
            <person name="Roy A."/>
            <person name="Sainte-Marthe L."/>
            <person name="Verdier J."/>
            <person name="Verdier-Discala C."/>
            <person name="Hillier L.W."/>
            <person name="Fulton L."/>
            <person name="McPherson J."/>
            <person name="Matsuda F."/>
            <person name="Wilson R."/>
            <person name="Scarpelli C."/>
            <person name="Gyapay G."/>
            <person name="Wincker P."/>
            <person name="Saurin W."/>
            <person name="Quetier F."/>
            <person name="Waterston R."/>
            <person name="Hood L."/>
            <person name="Weissenbach J."/>
        </authorList>
    </citation>
    <scope>NUCLEOTIDE SEQUENCE [LARGE SCALE GENOMIC DNA]</scope>
</reference>
<reference key="4">
    <citation type="submission" date="2005-07" db="EMBL/GenBank/DDBJ databases">
        <authorList>
            <person name="Mural R.J."/>
            <person name="Istrail S."/>
            <person name="Sutton G."/>
            <person name="Florea L."/>
            <person name="Halpern A.L."/>
            <person name="Mobarry C.M."/>
            <person name="Lippert R."/>
            <person name="Walenz B."/>
            <person name="Shatkay H."/>
            <person name="Dew I."/>
            <person name="Miller J.R."/>
            <person name="Flanigan M.J."/>
            <person name="Edwards N.J."/>
            <person name="Bolanos R."/>
            <person name="Fasulo D."/>
            <person name="Halldorsson B.V."/>
            <person name="Hannenhalli S."/>
            <person name="Turner R."/>
            <person name="Yooseph S."/>
            <person name="Lu F."/>
            <person name="Nusskern D.R."/>
            <person name="Shue B.C."/>
            <person name="Zheng X.H."/>
            <person name="Zhong F."/>
            <person name="Delcher A.L."/>
            <person name="Huson D.H."/>
            <person name="Kravitz S.A."/>
            <person name="Mouchard L."/>
            <person name="Reinert K."/>
            <person name="Remington K.A."/>
            <person name="Clark A.G."/>
            <person name="Waterman M.S."/>
            <person name="Eichler E.E."/>
            <person name="Adams M.D."/>
            <person name="Hunkapiller M.W."/>
            <person name="Myers E.W."/>
            <person name="Venter J.C."/>
        </authorList>
    </citation>
    <scope>NUCLEOTIDE SEQUENCE [LARGE SCALE GENOMIC DNA]</scope>
</reference>
<reference key="5">
    <citation type="journal article" date="2004" name="Genome Res.">
        <title>The status, quality, and expansion of the NIH full-length cDNA project: the Mammalian Gene Collection (MGC).</title>
        <authorList>
            <consortium name="The MGC Project Team"/>
        </authorList>
    </citation>
    <scope>NUCLEOTIDE SEQUENCE [LARGE SCALE MRNA] (ISOFORMS 1 AND 2)</scope>
    <source>
        <tissue>Brain</tissue>
        <tissue>Testis</tissue>
    </source>
</reference>
<reference key="6">
    <citation type="journal article" date="1998" name="J. Biol. Chem.">
        <title>Cloning of a phosphatidic acid-preferring phospholipase A1 from bovine testis.</title>
        <authorList>
            <person name="Higgs H.N."/>
            <person name="Han M.H."/>
            <person name="Johnson G.E."/>
            <person name="Glomset J.A."/>
        </authorList>
    </citation>
    <scope>TISSUE SPECIFICITY</scope>
</reference>
<reference key="7">
    <citation type="journal article" date="2005" name="J. Biol. Chem.">
        <title>p125 is localized in endoplasmic reticulum exit sites and involved in their organization.</title>
        <authorList>
            <person name="Shimoi W."/>
            <person name="Ezawa I."/>
            <person name="Nakamoto K."/>
            <person name="Uesaki S."/>
            <person name="Gabreski G."/>
            <person name="Aridor M."/>
            <person name="Yamamoto A."/>
            <person name="Nagahama M."/>
            <person name="Tagaya M."/>
            <person name="Tani K."/>
        </authorList>
    </citation>
    <scope>SUBCELLULAR LOCATION</scope>
</reference>
<reference key="8">
    <citation type="journal article" date="2008" name="Proc. Natl. Acad. Sci. U.S.A.">
        <title>A quantitative atlas of mitotic phosphorylation.</title>
        <authorList>
            <person name="Dephoure N."/>
            <person name="Zhou C."/>
            <person name="Villen J."/>
            <person name="Beausoleil S.A."/>
            <person name="Bakalarski C.E."/>
            <person name="Elledge S.J."/>
            <person name="Gygi S.P."/>
        </authorList>
    </citation>
    <scope>IDENTIFICATION BY MASS SPECTROMETRY [LARGE SCALE ANALYSIS]</scope>
    <source>
        <tissue>Cervix carcinoma</tissue>
    </source>
</reference>
<reference key="9">
    <citation type="journal article" date="2010" name="Biochim. Biophys. Acta">
        <title>Generation of lysophosphatidylinositol by DDHD domain containing 1 (DDHD1): Possible involvement of phospholipase D/phosphatidic acid in the activation of DDHD1.</title>
        <authorList>
            <person name="Yamashita A."/>
            <person name="Kumazawa T."/>
            <person name="Koga H."/>
            <person name="Suzuki N."/>
            <person name="Oka S."/>
            <person name="Sugiura T."/>
        </authorList>
    </citation>
    <scope>FUNCTION</scope>
    <scope>CATALYTIC ACTIVITY</scope>
    <scope>ACTIVITY REGULATION</scope>
</reference>
<reference key="10">
    <citation type="journal article" date="2012" name="Am. J. Hum. Genet.">
        <title>Alteration of fatty-acid-metabolizing enzymes affects mitochondrial form and function in hereditary spastic paraplegia.</title>
        <authorList>
            <person name="Tesson C."/>
            <person name="Nawara M."/>
            <person name="Salih M.A."/>
            <person name="Rossignol R."/>
            <person name="Zaki M.S."/>
            <person name="Al Balwi M."/>
            <person name="Schule R."/>
            <person name="Mignot C."/>
            <person name="Obre E."/>
            <person name="Bouhouche A."/>
            <person name="Santorelli F.M."/>
            <person name="Durand C.M."/>
            <person name="Oteyza A.C."/>
            <person name="El-Hachimi K.H."/>
            <person name="Al Drees A."/>
            <person name="Bouslam N."/>
            <person name="Lamari F."/>
            <person name="Elmalik S.A."/>
            <person name="Kabiraj M.M."/>
            <person name="Seidahmed M.Z."/>
            <person name="Esteves T."/>
            <person name="Gaussen M."/>
            <person name="Monin M.L."/>
            <person name="Gyapay G."/>
            <person name="Lechner D."/>
            <person name="Gonzalez M."/>
            <person name="Depienne C."/>
            <person name="Mochel F."/>
            <person name="Lavie J."/>
            <person name="Schols L."/>
            <person name="Lacombe D."/>
            <person name="Yahyaoui M."/>
            <person name="Al Abdulkareem I."/>
            <person name="Zuchner S."/>
            <person name="Yamashita A."/>
            <person name="Benomar A."/>
            <person name="Goizet C."/>
            <person name="Durr A."/>
            <person name="Gleeson J.G."/>
            <person name="Darios F."/>
            <person name="Brice A."/>
            <person name="Stevanin G."/>
        </authorList>
    </citation>
    <scope>INVOLVEMENT IN SPG28</scope>
</reference>
<reference key="11">
    <citation type="journal article" date="2012" name="Biochim. Biophys. Acta">
        <title>Roles of SAM and DDHD domains in mammalian intracellular phospholipase A1 KIAA0725p.</title>
        <authorList>
            <person name="Inoue H."/>
            <person name="Baba T."/>
            <person name="Sato S."/>
            <person name="Ohtsuki R."/>
            <person name="Takemori A."/>
            <person name="Watanabe T."/>
            <person name="Tagaya M."/>
            <person name="Tani K."/>
        </authorList>
    </citation>
    <scope>FUNCTION</scope>
    <scope>SUBUNIT</scope>
    <scope>HOMOOLIGOMER FORMATION</scope>
    <scope>INTERACTION WITH DDHD2</scope>
    <scope>MUTAGENESIS OF LEU-590; ILE-593; ASP-662; ASP-848; HIS-867 AND ASP-875</scope>
    <scope>CATALYTIC ACTIVITY</scope>
</reference>
<reference key="12">
    <citation type="journal article" date="2014" name="J. Biol. Chem.">
        <title>Phosphatidic acid (PA)-preferring phospholipase A1 regulates mitochondrial dynamics.</title>
        <authorList>
            <person name="Baba T."/>
            <person name="Kashiwagi Y."/>
            <person name="Arimitsu N."/>
            <person name="Kogure T."/>
            <person name="Edo A."/>
            <person name="Maruyama T."/>
            <person name="Nakao K."/>
            <person name="Nakanishi H."/>
            <person name="Kinoshita M."/>
            <person name="Frohman M.A."/>
            <person name="Yamamoto A."/>
            <person name="Tani K."/>
        </authorList>
    </citation>
    <scope>FUNCTION</scope>
</reference>
<reference key="13">
    <citation type="journal article" date="2023" name="Biomedicines">
        <title>Oleic Acid-Containing Phosphatidylinositol Is a Blood Biomarker Candidate for SPG28.</title>
        <authorList>
            <person name="Morikawa T."/>
            <person name="Takahashi M."/>
            <person name="Izumi Y."/>
            <person name="Bamba T."/>
            <person name="Moriyama K."/>
            <person name="Hattori G."/>
            <person name="Fujioka R."/>
            <person name="Miura S."/>
            <person name="Shibata H."/>
        </authorList>
    </citation>
    <scope>FUNCTION</scope>
    <scope>CATALYTIC ACTIVITY</scope>
    <scope>PATHWAY</scope>
</reference>
<reference key="14">
    <citation type="journal article" date="2013" name="J. Proteome Res.">
        <title>Toward a comprehensive characterization of a human cancer cell phosphoproteome.</title>
        <authorList>
            <person name="Zhou H."/>
            <person name="Di Palma S."/>
            <person name="Preisinger C."/>
            <person name="Peng M."/>
            <person name="Polat A.N."/>
            <person name="Heck A.J."/>
            <person name="Mohammed S."/>
        </authorList>
    </citation>
    <scope>PHOSPHORYLATION [LARGE SCALE ANALYSIS] AT SER-8 AND SER-11</scope>
    <scope>IDENTIFICATION BY MASS SPECTROMETRY [LARGE SCALE ANALYSIS]</scope>
    <source>
        <tissue>Erythroleukemia</tissue>
    </source>
</reference>